<gene>
    <name evidence="1" type="primary">gpmI</name>
    <name type="ordered locus">VV3082</name>
</gene>
<name>GPMI_VIBVY</name>
<organism>
    <name type="scientific">Vibrio vulnificus (strain YJ016)</name>
    <dbReference type="NCBI Taxonomy" id="196600"/>
    <lineage>
        <taxon>Bacteria</taxon>
        <taxon>Pseudomonadati</taxon>
        <taxon>Pseudomonadota</taxon>
        <taxon>Gammaproteobacteria</taxon>
        <taxon>Vibrionales</taxon>
        <taxon>Vibrionaceae</taxon>
        <taxon>Vibrio</taxon>
    </lineage>
</organism>
<protein>
    <recommendedName>
        <fullName evidence="1">2,3-bisphosphoglycerate-independent phosphoglycerate mutase</fullName>
        <shortName evidence="1">BPG-independent PGAM</shortName>
        <shortName evidence="1">Phosphoglyceromutase</shortName>
        <shortName evidence="1">iPGM</shortName>
        <ecNumber evidence="1">5.4.2.12</ecNumber>
    </recommendedName>
</protein>
<dbReference type="EC" id="5.4.2.12" evidence="1"/>
<dbReference type="EMBL" id="BA000037">
    <property type="protein sequence ID" value="BAC95846.1"/>
    <property type="status" value="ALT_INIT"/>
    <property type="molecule type" value="Genomic_DNA"/>
</dbReference>
<dbReference type="RefSeq" id="WP_011151333.1">
    <property type="nucleotide sequence ID" value="NC_005139.1"/>
</dbReference>
<dbReference type="SMR" id="Q7MGZ2"/>
<dbReference type="STRING" id="672.VV93_v1c28100"/>
<dbReference type="KEGG" id="vvy:VV3082"/>
<dbReference type="PATRIC" id="fig|196600.6.peg.3059"/>
<dbReference type="eggNOG" id="COG0696">
    <property type="taxonomic scope" value="Bacteria"/>
</dbReference>
<dbReference type="HOGENOM" id="CLU_026099_2_0_6"/>
<dbReference type="UniPathway" id="UPA00109">
    <property type="reaction ID" value="UER00186"/>
</dbReference>
<dbReference type="Proteomes" id="UP000002675">
    <property type="component" value="Chromosome I"/>
</dbReference>
<dbReference type="GO" id="GO:0005829">
    <property type="term" value="C:cytosol"/>
    <property type="evidence" value="ECO:0007669"/>
    <property type="project" value="TreeGrafter"/>
</dbReference>
<dbReference type="GO" id="GO:0030145">
    <property type="term" value="F:manganese ion binding"/>
    <property type="evidence" value="ECO:0007669"/>
    <property type="project" value="UniProtKB-UniRule"/>
</dbReference>
<dbReference type="GO" id="GO:0004619">
    <property type="term" value="F:phosphoglycerate mutase activity"/>
    <property type="evidence" value="ECO:0007669"/>
    <property type="project" value="UniProtKB-EC"/>
</dbReference>
<dbReference type="GO" id="GO:0006007">
    <property type="term" value="P:glucose catabolic process"/>
    <property type="evidence" value="ECO:0007669"/>
    <property type="project" value="InterPro"/>
</dbReference>
<dbReference type="GO" id="GO:0006096">
    <property type="term" value="P:glycolytic process"/>
    <property type="evidence" value="ECO:0007669"/>
    <property type="project" value="UniProtKB-UniRule"/>
</dbReference>
<dbReference type="CDD" id="cd16010">
    <property type="entry name" value="iPGM"/>
    <property type="match status" value="1"/>
</dbReference>
<dbReference type="FunFam" id="3.40.1450.10:FF:000001">
    <property type="entry name" value="2,3-bisphosphoglycerate-independent phosphoglycerate mutase"/>
    <property type="match status" value="1"/>
</dbReference>
<dbReference type="FunFam" id="3.40.720.10:FF:000001">
    <property type="entry name" value="2,3-bisphosphoglycerate-independent phosphoglycerate mutase"/>
    <property type="match status" value="1"/>
</dbReference>
<dbReference type="Gene3D" id="3.40.720.10">
    <property type="entry name" value="Alkaline Phosphatase, subunit A"/>
    <property type="match status" value="1"/>
</dbReference>
<dbReference type="Gene3D" id="3.40.1450.10">
    <property type="entry name" value="BPG-independent phosphoglycerate mutase, domain B"/>
    <property type="match status" value="1"/>
</dbReference>
<dbReference type="HAMAP" id="MF_01038">
    <property type="entry name" value="GpmI"/>
    <property type="match status" value="1"/>
</dbReference>
<dbReference type="InterPro" id="IPR017850">
    <property type="entry name" value="Alkaline_phosphatase_core_sf"/>
</dbReference>
<dbReference type="InterPro" id="IPR011258">
    <property type="entry name" value="BPG-indep_PGM_N"/>
</dbReference>
<dbReference type="InterPro" id="IPR006124">
    <property type="entry name" value="Metalloenzyme"/>
</dbReference>
<dbReference type="InterPro" id="IPR036646">
    <property type="entry name" value="PGAM_B_sf"/>
</dbReference>
<dbReference type="InterPro" id="IPR005995">
    <property type="entry name" value="Pgm_bpd_ind"/>
</dbReference>
<dbReference type="NCBIfam" id="TIGR01307">
    <property type="entry name" value="pgm_bpd_ind"/>
    <property type="match status" value="1"/>
</dbReference>
<dbReference type="NCBIfam" id="NF003897">
    <property type="entry name" value="PRK05434.1-5"/>
    <property type="match status" value="1"/>
</dbReference>
<dbReference type="PANTHER" id="PTHR31637">
    <property type="entry name" value="2,3-BISPHOSPHOGLYCERATE-INDEPENDENT PHOSPHOGLYCERATE MUTASE"/>
    <property type="match status" value="1"/>
</dbReference>
<dbReference type="PANTHER" id="PTHR31637:SF0">
    <property type="entry name" value="2,3-BISPHOSPHOGLYCERATE-INDEPENDENT PHOSPHOGLYCERATE MUTASE"/>
    <property type="match status" value="1"/>
</dbReference>
<dbReference type="Pfam" id="PF06415">
    <property type="entry name" value="iPGM_N"/>
    <property type="match status" value="1"/>
</dbReference>
<dbReference type="Pfam" id="PF01676">
    <property type="entry name" value="Metalloenzyme"/>
    <property type="match status" value="1"/>
</dbReference>
<dbReference type="PIRSF" id="PIRSF001492">
    <property type="entry name" value="IPGAM"/>
    <property type="match status" value="1"/>
</dbReference>
<dbReference type="SUPFAM" id="SSF64158">
    <property type="entry name" value="2,3-Bisphosphoglycerate-independent phosphoglycerate mutase, substrate-binding domain"/>
    <property type="match status" value="1"/>
</dbReference>
<dbReference type="SUPFAM" id="SSF53649">
    <property type="entry name" value="Alkaline phosphatase-like"/>
    <property type="match status" value="1"/>
</dbReference>
<keyword id="KW-0324">Glycolysis</keyword>
<keyword id="KW-0413">Isomerase</keyword>
<keyword id="KW-0464">Manganese</keyword>
<keyword id="KW-0479">Metal-binding</keyword>
<accession>Q7MGZ2</accession>
<comment type="function">
    <text evidence="1">Catalyzes the interconversion of 2-phosphoglycerate and 3-phosphoglycerate.</text>
</comment>
<comment type="catalytic activity">
    <reaction evidence="1">
        <text>(2R)-2-phosphoglycerate = (2R)-3-phosphoglycerate</text>
        <dbReference type="Rhea" id="RHEA:15901"/>
        <dbReference type="ChEBI" id="CHEBI:58272"/>
        <dbReference type="ChEBI" id="CHEBI:58289"/>
        <dbReference type="EC" id="5.4.2.12"/>
    </reaction>
</comment>
<comment type="cofactor">
    <cofactor evidence="1">
        <name>Mn(2+)</name>
        <dbReference type="ChEBI" id="CHEBI:29035"/>
    </cofactor>
    <text evidence="1">Binds 2 manganese ions per subunit.</text>
</comment>
<comment type="pathway">
    <text evidence="1">Carbohydrate degradation; glycolysis; pyruvate from D-glyceraldehyde 3-phosphate: step 3/5.</text>
</comment>
<comment type="subunit">
    <text evidence="1">Monomer.</text>
</comment>
<comment type="similarity">
    <text evidence="1">Belongs to the BPG-independent phosphoglycerate mutase family.</text>
</comment>
<comment type="sequence caution" evidence="2">
    <conflict type="erroneous initiation">
        <sequence resource="EMBL-CDS" id="BAC95846"/>
    </conflict>
    <text>Extended N-terminus.</text>
</comment>
<evidence type="ECO:0000255" key="1">
    <source>
        <dbReference type="HAMAP-Rule" id="MF_01038"/>
    </source>
</evidence>
<evidence type="ECO:0000305" key="2"/>
<proteinExistence type="inferred from homology"/>
<reference key="1">
    <citation type="journal article" date="2003" name="Genome Res.">
        <title>Comparative genome analysis of Vibrio vulnificus, a marine pathogen.</title>
        <authorList>
            <person name="Chen C.-Y."/>
            <person name="Wu K.-M."/>
            <person name="Chang Y.-C."/>
            <person name="Chang C.-H."/>
            <person name="Tsai H.-C."/>
            <person name="Liao T.-L."/>
            <person name="Liu Y.-M."/>
            <person name="Chen H.-J."/>
            <person name="Shen A.B.-T."/>
            <person name="Li J.-C."/>
            <person name="Su T.-L."/>
            <person name="Shao C.-P."/>
            <person name="Lee C.-T."/>
            <person name="Hor L.-I."/>
            <person name="Tsai S.-F."/>
        </authorList>
    </citation>
    <scope>NUCLEOTIDE SEQUENCE [LARGE SCALE GENOMIC DNA]</scope>
    <source>
        <strain>YJ016</strain>
    </source>
</reference>
<feature type="chain" id="PRO_0000212230" description="2,3-bisphosphoglycerate-independent phosphoglycerate mutase">
    <location>
        <begin position="1"/>
        <end position="510"/>
    </location>
</feature>
<feature type="active site" description="Phosphoserine intermediate" evidence="1">
    <location>
        <position position="63"/>
    </location>
</feature>
<feature type="binding site" evidence="1">
    <location>
        <position position="13"/>
    </location>
    <ligand>
        <name>Mn(2+)</name>
        <dbReference type="ChEBI" id="CHEBI:29035"/>
        <label>2</label>
    </ligand>
</feature>
<feature type="binding site" evidence="1">
    <location>
        <position position="63"/>
    </location>
    <ligand>
        <name>Mn(2+)</name>
        <dbReference type="ChEBI" id="CHEBI:29035"/>
        <label>2</label>
    </ligand>
</feature>
<feature type="binding site" evidence="1">
    <location>
        <position position="124"/>
    </location>
    <ligand>
        <name>substrate</name>
    </ligand>
</feature>
<feature type="binding site" evidence="1">
    <location>
        <begin position="154"/>
        <end position="155"/>
    </location>
    <ligand>
        <name>substrate</name>
    </ligand>
</feature>
<feature type="binding site" evidence="1">
    <location>
        <position position="186"/>
    </location>
    <ligand>
        <name>substrate</name>
    </ligand>
</feature>
<feature type="binding site" evidence="1">
    <location>
        <position position="192"/>
    </location>
    <ligand>
        <name>substrate</name>
    </ligand>
</feature>
<feature type="binding site" evidence="1">
    <location>
        <begin position="262"/>
        <end position="265"/>
    </location>
    <ligand>
        <name>substrate</name>
    </ligand>
</feature>
<feature type="binding site" evidence="1">
    <location>
        <position position="334"/>
    </location>
    <ligand>
        <name>substrate</name>
    </ligand>
</feature>
<feature type="binding site" evidence="1">
    <location>
        <position position="401"/>
    </location>
    <ligand>
        <name>Mn(2+)</name>
        <dbReference type="ChEBI" id="CHEBI:29035"/>
        <label>1</label>
    </ligand>
</feature>
<feature type="binding site" evidence="1">
    <location>
        <position position="405"/>
    </location>
    <ligand>
        <name>Mn(2+)</name>
        <dbReference type="ChEBI" id="CHEBI:29035"/>
        <label>1</label>
    </ligand>
</feature>
<feature type="binding site" evidence="1">
    <location>
        <position position="442"/>
    </location>
    <ligand>
        <name>Mn(2+)</name>
        <dbReference type="ChEBI" id="CHEBI:29035"/>
        <label>2</label>
    </ligand>
</feature>
<feature type="binding site" evidence="1">
    <location>
        <position position="443"/>
    </location>
    <ligand>
        <name>Mn(2+)</name>
        <dbReference type="ChEBI" id="CHEBI:29035"/>
        <label>2</label>
    </ligand>
</feature>
<feature type="binding site" evidence="1">
    <location>
        <position position="461"/>
    </location>
    <ligand>
        <name>Mn(2+)</name>
        <dbReference type="ChEBI" id="CHEBI:29035"/>
        <label>1</label>
    </ligand>
</feature>
<sequence length="510" mass="54952">MSAKKPLALVILDGYGYREDTASNAIANAKTPVMDALIANQPNTLISASGMDVGLPDGQMGNSEVGHTNIGAGRVVYQDLTRITKSILDGEFQQTAALVEAIDTAVKAEKAVHIMGLMSPGGVHSHEDHILAAVEMAAERGAEKIYLHCFLDGRDTPPRSAEGSLQRFQDLFAKLGKGRVASLVGRYYAMDRDNNWDRVQVAYDLLTQAKADFTYDSAVAGLAAAYERGENDEFVKATEIKAEGQESAAMQDGDAVIFMNYRADRARQITRTFVADFAGFERAAFPAVNFVMLTQYAADIPLAIAFPPASLENTYGEWLSKQGQTQLRISETEKYAHVTFFFNGGVETEFAGEERQLVASPKVATYDLQPEMSSTELTEKMVAAIKSGKYDTIICNYPNADMVGHTGVYEAAEKAIEALDASVGQVVEAIKEVGGQLLITADHGNAEMMVDPETGGIHTAHTSLPVPLIYVGDKAVEFKEGGKLSDLAPTMLSLAGLEIPAEMTGQVLVK</sequence>